<gene>
    <name evidence="1" type="primary">rplA</name>
    <name type="ordered locus">Jann_0564</name>
</gene>
<evidence type="ECO:0000255" key="1">
    <source>
        <dbReference type="HAMAP-Rule" id="MF_01318"/>
    </source>
</evidence>
<evidence type="ECO:0000305" key="2"/>
<organism>
    <name type="scientific">Jannaschia sp. (strain CCS1)</name>
    <dbReference type="NCBI Taxonomy" id="290400"/>
    <lineage>
        <taxon>Bacteria</taxon>
        <taxon>Pseudomonadati</taxon>
        <taxon>Pseudomonadota</taxon>
        <taxon>Alphaproteobacteria</taxon>
        <taxon>Rhodobacterales</taxon>
        <taxon>Roseobacteraceae</taxon>
        <taxon>Jannaschia</taxon>
    </lineage>
</organism>
<proteinExistence type="inferred from homology"/>
<sequence length="232" mass="24170">MGKMGKRFAAAKAAVEGKENITVEEAVALLKGNSKTKFDETIEIAMKLGVDPRHADQMVRGTVNLPNGTGKTVRVAVFARGPKAEEATAAGADIVGAEDLMETVQGGTIEFDRCIATPDMMPIVGRLGKVLGPRNLMPNPKIGTVTMDVKEAVEAAKGGQVQFKAEKAGVVHAGVGKASFTEAQLVENVRAFVDAVSKAKPSGSKGTYMQKINLTSTMGPGVSLSVENATGN</sequence>
<protein>
    <recommendedName>
        <fullName evidence="1">Large ribosomal subunit protein uL1</fullName>
    </recommendedName>
    <alternativeName>
        <fullName evidence="2">50S ribosomal protein L1</fullName>
    </alternativeName>
</protein>
<accession>Q28UY1</accession>
<feature type="chain" id="PRO_0000308025" description="Large ribosomal subunit protein uL1">
    <location>
        <begin position="1"/>
        <end position="232"/>
    </location>
</feature>
<name>RL1_JANSC</name>
<keyword id="KW-1185">Reference proteome</keyword>
<keyword id="KW-0678">Repressor</keyword>
<keyword id="KW-0687">Ribonucleoprotein</keyword>
<keyword id="KW-0689">Ribosomal protein</keyword>
<keyword id="KW-0694">RNA-binding</keyword>
<keyword id="KW-0699">rRNA-binding</keyword>
<keyword id="KW-0810">Translation regulation</keyword>
<keyword id="KW-0820">tRNA-binding</keyword>
<reference key="1">
    <citation type="submission" date="2006-02" db="EMBL/GenBank/DDBJ databases">
        <title>Complete sequence of chromosome of Jannaschia sp. CCS1.</title>
        <authorList>
            <consortium name="US DOE Joint Genome Institute"/>
            <person name="Copeland A."/>
            <person name="Lucas S."/>
            <person name="Lapidus A."/>
            <person name="Barry K."/>
            <person name="Detter J.C."/>
            <person name="Glavina del Rio T."/>
            <person name="Hammon N."/>
            <person name="Israni S."/>
            <person name="Pitluck S."/>
            <person name="Brettin T."/>
            <person name="Bruce D."/>
            <person name="Han C."/>
            <person name="Tapia R."/>
            <person name="Gilna P."/>
            <person name="Chertkov O."/>
            <person name="Saunders E."/>
            <person name="Schmutz J."/>
            <person name="Larimer F."/>
            <person name="Land M."/>
            <person name="Kyrpides N."/>
            <person name="Lykidis A."/>
            <person name="Moran M.A."/>
            <person name="Belas R."/>
            <person name="Ye W."/>
            <person name="Buchan A."/>
            <person name="Gonzalez J.M."/>
            <person name="Schell M.A."/>
            <person name="Richardson P."/>
        </authorList>
    </citation>
    <scope>NUCLEOTIDE SEQUENCE [LARGE SCALE GENOMIC DNA]</scope>
    <source>
        <strain>CCS1</strain>
    </source>
</reference>
<comment type="function">
    <text evidence="1">Binds directly to 23S rRNA. The L1 stalk is quite mobile in the ribosome, and is involved in E site tRNA release.</text>
</comment>
<comment type="function">
    <text evidence="1">Protein L1 is also a translational repressor protein, it controls the translation of the L11 operon by binding to its mRNA.</text>
</comment>
<comment type="subunit">
    <text evidence="1">Part of the 50S ribosomal subunit.</text>
</comment>
<comment type="similarity">
    <text evidence="1">Belongs to the universal ribosomal protein uL1 family.</text>
</comment>
<dbReference type="EMBL" id="CP000264">
    <property type="protein sequence ID" value="ABD53481.1"/>
    <property type="molecule type" value="Genomic_DNA"/>
</dbReference>
<dbReference type="RefSeq" id="WP_011453690.1">
    <property type="nucleotide sequence ID" value="NC_007802.1"/>
</dbReference>
<dbReference type="SMR" id="Q28UY1"/>
<dbReference type="STRING" id="290400.Jann_0564"/>
<dbReference type="KEGG" id="jan:Jann_0564"/>
<dbReference type="eggNOG" id="COG0081">
    <property type="taxonomic scope" value="Bacteria"/>
</dbReference>
<dbReference type="HOGENOM" id="CLU_062853_0_0_5"/>
<dbReference type="OrthoDB" id="9803740at2"/>
<dbReference type="Proteomes" id="UP000008326">
    <property type="component" value="Chromosome"/>
</dbReference>
<dbReference type="GO" id="GO:0022625">
    <property type="term" value="C:cytosolic large ribosomal subunit"/>
    <property type="evidence" value="ECO:0007669"/>
    <property type="project" value="TreeGrafter"/>
</dbReference>
<dbReference type="GO" id="GO:0019843">
    <property type="term" value="F:rRNA binding"/>
    <property type="evidence" value="ECO:0007669"/>
    <property type="project" value="UniProtKB-UniRule"/>
</dbReference>
<dbReference type="GO" id="GO:0003735">
    <property type="term" value="F:structural constituent of ribosome"/>
    <property type="evidence" value="ECO:0007669"/>
    <property type="project" value="InterPro"/>
</dbReference>
<dbReference type="GO" id="GO:0000049">
    <property type="term" value="F:tRNA binding"/>
    <property type="evidence" value="ECO:0007669"/>
    <property type="project" value="UniProtKB-KW"/>
</dbReference>
<dbReference type="GO" id="GO:0006417">
    <property type="term" value="P:regulation of translation"/>
    <property type="evidence" value="ECO:0007669"/>
    <property type="project" value="UniProtKB-KW"/>
</dbReference>
<dbReference type="GO" id="GO:0006412">
    <property type="term" value="P:translation"/>
    <property type="evidence" value="ECO:0007669"/>
    <property type="project" value="UniProtKB-UniRule"/>
</dbReference>
<dbReference type="CDD" id="cd00403">
    <property type="entry name" value="Ribosomal_L1"/>
    <property type="match status" value="1"/>
</dbReference>
<dbReference type="FunFam" id="3.40.50.790:FF:000001">
    <property type="entry name" value="50S ribosomal protein L1"/>
    <property type="match status" value="1"/>
</dbReference>
<dbReference type="Gene3D" id="3.30.190.20">
    <property type="match status" value="1"/>
</dbReference>
<dbReference type="Gene3D" id="3.40.50.790">
    <property type="match status" value="1"/>
</dbReference>
<dbReference type="HAMAP" id="MF_01318_B">
    <property type="entry name" value="Ribosomal_uL1_B"/>
    <property type="match status" value="1"/>
</dbReference>
<dbReference type="InterPro" id="IPR005878">
    <property type="entry name" value="Ribosom_uL1_bac-type"/>
</dbReference>
<dbReference type="InterPro" id="IPR002143">
    <property type="entry name" value="Ribosomal_uL1"/>
</dbReference>
<dbReference type="InterPro" id="IPR023674">
    <property type="entry name" value="Ribosomal_uL1-like"/>
</dbReference>
<dbReference type="InterPro" id="IPR028364">
    <property type="entry name" value="Ribosomal_uL1/biogenesis"/>
</dbReference>
<dbReference type="InterPro" id="IPR016095">
    <property type="entry name" value="Ribosomal_uL1_3-a/b-sand"/>
</dbReference>
<dbReference type="InterPro" id="IPR023673">
    <property type="entry name" value="Ribosomal_uL1_CS"/>
</dbReference>
<dbReference type="NCBIfam" id="TIGR01169">
    <property type="entry name" value="rplA_bact"/>
    <property type="match status" value="1"/>
</dbReference>
<dbReference type="PANTHER" id="PTHR36427">
    <property type="entry name" value="54S RIBOSOMAL PROTEIN L1, MITOCHONDRIAL"/>
    <property type="match status" value="1"/>
</dbReference>
<dbReference type="PANTHER" id="PTHR36427:SF3">
    <property type="entry name" value="LARGE RIBOSOMAL SUBUNIT PROTEIN UL1M"/>
    <property type="match status" value="1"/>
</dbReference>
<dbReference type="Pfam" id="PF00687">
    <property type="entry name" value="Ribosomal_L1"/>
    <property type="match status" value="1"/>
</dbReference>
<dbReference type="PIRSF" id="PIRSF002155">
    <property type="entry name" value="Ribosomal_L1"/>
    <property type="match status" value="1"/>
</dbReference>
<dbReference type="SUPFAM" id="SSF56808">
    <property type="entry name" value="Ribosomal protein L1"/>
    <property type="match status" value="1"/>
</dbReference>
<dbReference type="PROSITE" id="PS01199">
    <property type="entry name" value="RIBOSOMAL_L1"/>
    <property type="match status" value="1"/>
</dbReference>